<gene>
    <name evidence="1" type="primary">truA</name>
    <name type="ordered locus">Rsph17025_0502</name>
</gene>
<sequence>MPRYALKIEYDGAPFAGWQRQAVLPSVQGAIEAALGRLEPGPHTIAAAGRTDTGVHATGQVAHCDLGKDWDPFRLAGALNAHLKPLPVAVVAAARVGEDFHARFSAIERRYLFRLLARRAPEVHDRGRVWRVPHPLDGAAMREAAAHLVGRHDFTTFRAIGCQAASPVKTLDELTLETVEVPNGVEYRFRLRARSFLHNQVRSIVGTLERVGAGAWAPDRVKEALEARDRAACGPVCPPQGLYLTGVGYPADPFAAT</sequence>
<protein>
    <recommendedName>
        <fullName evidence="1">tRNA pseudouridine synthase A</fullName>
        <ecNumber evidence="1">5.4.99.12</ecNumber>
    </recommendedName>
    <alternativeName>
        <fullName evidence="1">tRNA pseudouridine(38-40) synthase</fullName>
    </alternativeName>
    <alternativeName>
        <fullName evidence="1">tRNA pseudouridylate synthase I</fullName>
    </alternativeName>
    <alternativeName>
        <fullName evidence="1">tRNA-uridine isomerase I</fullName>
    </alternativeName>
</protein>
<organism>
    <name type="scientific">Cereibacter sphaeroides (strain ATCC 17025 / ATH 2.4.3)</name>
    <name type="common">Rhodobacter sphaeroides</name>
    <dbReference type="NCBI Taxonomy" id="349102"/>
    <lineage>
        <taxon>Bacteria</taxon>
        <taxon>Pseudomonadati</taxon>
        <taxon>Pseudomonadota</taxon>
        <taxon>Alphaproteobacteria</taxon>
        <taxon>Rhodobacterales</taxon>
        <taxon>Paracoccaceae</taxon>
        <taxon>Cereibacter</taxon>
    </lineage>
</organism>
<name>TRUA_CERS5</name>
<evidence type="ECO:0000255" key="1">
    <source>
        <dbReference type="HAMAP-Rule" id="MF_00171"/>
    </source>
</evidence>
<accession>A4WPU4</accession>
<dbReference type="EC" id="5.4.99.12" evidence="1"/>
<dbReference type="EMBL" id="CP000661">
    <property type="protein sequence ID" value="ABP69408.1"/>
    <property type="molecule type" value="Genomic_DNA"/>
</dbReference>
<dbReference type="SMR" id="A4WPU4"/>
<dbReference type="STRING" id="349102.Rsph17025_0502"/>
<dbReference type="KEGG" id="rsq:Rsph17025_0502"/>
<dbReference type="eggNOG" id="COG0101">
    <property type="taxonomic scope" value="Bacteria"/>
</dbReference>
<dbReference type="HOGENOM" id="CLU_014673_0_2_5"/>
<dbReference type="BioCyc" id="RSPH349102:G1G8M-518-MONOMER"/>
<dbReference type="GO" id="GO:0003723">
    <property type="term" value="F:RNA binding"/>
    <property type="evidence" value="ECO:0007669"/>
    <property type="project" value="InterPro"/>
</dbReference>
<dbReference type="GO" id="GO:0160147">
    <property type="term" value="F:tRNA pseudouridine(38-40) synthase activity"/>
    <property type="evidence" value="ECO:0007669"/>
    <property type="project" value="UniProtKB-EC"/>
</dbReference>
<dbReference type="GO" id="GO:0031119">
    <property type="term" value="P:tRNA pseudouridine synthesis"/>
    <property type="evidence" value="ECO:0007669"/>
    <property type="project" value="UniProtKB-UniRule"/>
</dbReference>
<dbReference type="CDD" id="cd02570">
    <property type="entry name" value="PseudoU_synth_EcTruA"/>
    <property type="match status" value="1"/>
</dbReference>
<dbReference type="FunFam" id="3.30.70.580:FF:000001">
    <property type="entry name" value="tRNA pseudouridine synthase A"/>
    <property type="match status" value="1"/>
</dbReference>
<dbReference type="Gene3D" id="3.30.70.660">
    <property type="entry name" value="Pseudouridine synthase I, catalytic domain, C-terminal subdomain"/>
    <property type="match status" value="1"/>
</dbReference>
<dbReference type="Gene3D" id="3.30.70.580">
    <property type="entry name" value="Pseudouridine synthase I, catalytic domain, N-terminal subdomain"/>
    <property type="match status" value="1"/>
</dbReference>
<dbReference type="HAMAP" id="MF_00171">
    <property type="entry name" value="TruA"/>
    <property type="match status" value="1"/>
</dbReference>
<dbReference type="InterPro" id="IPR020103">
    <property type="entry name" value="PsdUridine_synth_cat_dom_sf"/>
</dbReference>
<dbReference type="InterPro" id="IPR001406">
    <property type="entry name" value="PsdUridine_synth_TruA"/>
</dbReference>
<dbReference type="InterPro" id="IPR020097">
    <property type="entry name" value="PsdUridine_synth_TruA_a/b_dom"/>
</dbReference>
<dbReference type="InterPro" id="IPR020095">
    <property type="entry name" value="PsdUridine_synth_TruA_C"/>
</dbReference>
<dbReference type="InterPro" id="IPR020094">
    <property type="entry name" value="TruA/RsuA/RluB/E/F_N"/>
</dbReference>
<dbReference type="NCBIfam" id="TIGR00071">
    <property type="entry name" value="hisT_truA"/>
    <property type="match status" value="1"/>
</dbReference>
<dbReference type="PANTHER" id="PTHR11142">
    <property type="entry name" value="PSEUDOURIDYLATE SYNTHASE"/>
    <property type="match status" value="1"/>
</dbReference>
<dbReference type="PANTHER" id="PTHR11142:SF0">
    <property type="entry name" value="TRNA PSEUDOURIDINE SYNTHASE-LIKE 1"/>
    <property type="match status" value="1"/>
</dbReference>
<dbReference type="Pfam" id="PF01416">
    <property type="entry name" value="PseudoU_synth_1"/>
    <property type="match status" value="2"/>
</dbReference>
<dbReference type="PIRSF" id="PIRSF001430">
    <property type="entry name" value="tRNA_psdUrid_synth"/>
    <property type="match status" value="1"/>
</dbReference>
<dbReference type="SUPFAM" id="SSF55120">
    <property type="entry name" value="Pseudouridine synthase"/>
    <property type="match status" value="1"/>
</dbReference>
<feature type="chain" id="PRO_1000017155" description="tRNA pseudouridine synthase A">
    <location>
        <begin position="1"/>
        <end position="257"/>
    </location>
</feature>
<feature type="active site" description="Nucleophile" evidence="1">
    <location>
        <position position="52"/>
    </location>
</feature>
<feature type="binding site" evidence="1">
    <location>
        <position position="111"/>
    </location>
    <ligand>
        <name>substrate</name>
    </ligand>
</feature>
<comment type="function">
    <text evidence="1">Formation of pseudouridine at positions 38, 39 and 40 in the anticodon stem and loop of transfer RNAs.</text>
</comment>
<comment type="catalytic activity">
    <reaction evidence="1">
        <text>uridine(38/39/40) in tRNA = pseudouridine(38/39/40) in tRNA</text>
        <dbReference type="Rhea" id="RHEA:22376"/>
        <dbReference type="Rhea" id="RHEA-COMP:10085"/>
        <dbReference type="Rhea" id="RHEA-COMP:10087"/>
        <dbReference type="ChEBI" id="CHEBI:65314"/>
        <dbReference type="ChEBI" id="CHEBI:65315"/>
        <dbReference type="EC" id="5.4.99.12"/>
    </reaction>
</comment>
<comment type="subunit">
    <text evidence="1">Homodimer.</text>
</comment>
<comment type="similarity">
    <text evidence="1">Belongs to the tRNA pseudouridine synthase TruA family.</text>
</comment>
<keyword id="KW-0413">Isomerase</keyword>
<keyword id="KW-0819">tRNA processing</keyword>
<proteinExistence type="inferred from homology"/>
<reference key="1">
    <citation type="submission" date="2007-04" db="EMBL/GenBank/DDBJ databases">
        <title>Complete sequence of chromosome of Rhodobacter sphaeroides ATCC 17025.</title>
        <authorList>
            <consortium name="US DOE Joint Genome Institute"/>
            <person name="Copeland A."/>
            <person name="Lucas S."/>
            <person name="Lapidus A."/>
            <person name="Barry K."/>
            <person name="Detter J.C."/>
            <person name="Glavina del Rio T."/>
            <person name="Hammon N."/>
            <person name="Israni S."/>
            <person name="Dalin E."/>
            <person name="Tice H."/>
            <person name="Pitluck S."/>
            <person name="Chertkov O."/>
            <person name="Brettin T."/>
            <person name="Bruce D."/>
            <person name="Han C."/>
            <person name="Schmutz J."/>
            <person name="Larimer F."/>
            <person name="Land M."/>
            <person name="Hauser L."/>
            <person name="Kyrpides N."/>
            <person name="Kim E."/>
            <person name="Richardson P."/>
            <person name="Mackenzie C."/>
            <person name="Choudhary M."/>
            <person name="Donohue T.J."/>
            <person name="Kaplan S."/>
        </authorList>
    </citation>
    <scope>NUCLEOTIDE SEQUENCE [LARGE SCALE GENOMIC DNA]</scope>
    <source>
        <strain>ATCC 17025 / ATH 2.4.3</strain>
    </source>
</reference>